<reference key="1">
    <citation type="journal article" date="2006" name="Genome Biol.">
        <title>Genomic analysis reveals that Pseudomonas aeruginosa virulence is combinatorial.</title>
        <authorList>
            <person name="Lee D.G."/>
            <person name="Urbach J.M."/>
            <person name="Wu G."/>
            <person name="Liberati N.T."/>
            <person name="Feinbaum R.L."/>
            <person name="Miyata S."/>
            <person name="Diggins L.T."/>
            <person name="He J."/>
            <person name="Saucier M."/>
            <person name="Deziel E."/>
            <person name="Friedman L."/>
            <person name="Li L."/>
            <person name="Grills G."/>
            <person name="Montgomery K."/>
            <person name="Kucherlapati R."/>
            <person name="Rahme L.G."/>
            <person name="Ausubel F.M."/>
        </authorList>
    </citation>
    <scope>NUCLEOTIDE SEQUENCE [LARGE SCALE GENOMIC DNA]</scope>
    <source>
        <strain>UCBPP-PA14</strain>
    </source>
</reference>
<sequence length="381" mass="42549">MRNSGSSCSESVGPPLWLLAELTYRCPLQCPYCSNPLEFAREGAELSTAEWIEVFRQARELGAAQLGFSGGEPLLRQDLAELIEAGRGLGFYTNLITSGIGLDEARLARFAEAGLDHVQISFQAADEEVNNLLAGSRKAFAQKLAMARAVKAHGYPMVLNFVTHRHNIDNIERIIQLCIELEADYVELATCQFYGWAALNRAGLLPTRAQLERAERITAEYRQRLAAEGNPCKLIFVTPDYYEERPKACMGGWASVFLDITPDGTALPCHSARQLPVQFPNVREHSLRHIWYESFGFNRYRGDAWMPEPCRSCEEKERDHGGCRCQAFLLTGDADATDPVCAKSARHDLILAARRQAEEAPLGLDALTWRNQRASRLICKA</sequence>
<name>PQQE_PSEAB</name>
<keyword id="KW-0004">4Fe-4S</keyword>
<keyword id="KW-0408">Iron</keyword>
<keyword id="KW-0411">Iron-sulfur</keyword>
<keyword id="KW-0479">Metal-binding</keyword>
<keyword id="KW-0560">Oxidoreductase</keyword>
<keyword id="KW-0884">PQQ biosynthesis</keyword>
<keyword id="KW-0949">S-adenosyl-L-methionine</keyword>
<organism>
    <name type="scientific">Pseudomonas aeruginosa (strain UCBPP-PA14)</name>
    <dbReference type="NCBI Taxonomy" id="208963"/>
    <lineage>
        <taxon>Bacteria</taxon>
        <taxon>Pseudomonadati</taxon>
        <taxon>Pseudomonadota</taxon>
        <taxon>Gammaproteobacteria</taxon>
        <taxon>Pseudomonadales</taxon>
        <taxon>Pseudomonadaceae</taxon>
        <taxon>Pseudomonas</taxon>
    </lineage>
</organism>
<protein>
    <recommendedName>
        <fullName evidence="1">PqqA peptide cyclase</fullName>
        <ecNumber evidence="1">1.21.98.4</ecNumber>
    </recommendedName>
    <alternativeName>
        <fullName evidence="1">Coenzyme PQQ synthesis protein E</fullName>
    </alternativeName>
    <alternativeName>
        <fullName evidence="1">Pyrroloquinoline quinone biosynthesis protein E</fullName>
    </alternativeName>
</protein>
<feature type="chain" id="PRO_1000061916" description="PqqA peptide cyclase">
    <location>
        <begin position="1"/>
        <end position="381"/>
    </location>
</feature>
<feature type="domain" description="Radical SAM core" evidence="2">
    <location>
        <begin position="12"/>
        <end position="228"/>
    </location>
</feature>
<feature type="binding site" evidence="1">
    <location>
        <position position="26"/>
    </location>
    <ligand>
        <name>[4Fe-4S] cluster</name>
        <dbReference type="ChEBI" id="CHEBI:49883"/>
        <note>4Fe-4S-S-AdoMet</note>
    </ligand>
</feature>
<feature type="binding site" evidence="1">
    <location>
        <position position="30"/>
    </location>
    <ligand>
        <name>[4Fe-4S] cluster</name>
        <dbReference type="ChEBI" id="CHEBI:49883"/>
        <note>4Fe-4S-S-AdoMet</note>
    </ligand>
</feature>
<feature type="binding site" evidence="1">
    <location>
        <position position="33"/>
    </location>
    <ligand>
        <name>[4Fe-4S] cluster</name>
        <dbReference type="ChEBI" id="CHEBI:49883"/>
        <note>4Fe-4S-S-AdoMet</note>
    </ligand>
</feature>
<evidence type="ECO:0000255" key="1">
    <source>
        <dbReference type="HAMAP-Rule" id="MF_00660"/>
    </source>
</evidence>
<evidence type="ECO:0000255" key="2">
    <source>
        <dbReference type="PROSITE-ProRule" id="PRU01266"/>
    </source>
</evidence>
<proteinExistence type="inferred from homology"/>
<accession>Q02LD6</accession>
<dbReference type="EC" id="1.21.98.4" evidence="1"/>
<dbReference type="EMBL" id="CP000438">
    <property type="protein sequence ID" value="ABJ11176.1"/>
    <property type="molecule type" value="Genomic_DNA"/>
</dbReference>
<dbReference type="RefSeq" id="WP_003119136.1">
    <property type="nucleotide sequence ID" value="NZ_CP034244.1"/>
</dbReference>
<dbReference type="SMR" id="Q02LD6"/>
<dbReference type="KEGG" id="pau:PA14_38780"/>
<dbReference type="PseudoCAP" id="PA14_38780"/>
<dbReference type="HOGENOM" id="CLU_009273_4_7_6"/>
<dbReference type="BioCyc" id="PAER208963:G1G74-3259-MONOMER"/>
<dbReference type="UniPathway" id="UPA00539"/>
<dbReference type="Proteomes" id="UP000000653">
    <property type="component" value="Chromosome"/>
</dbReference>
<dbReference type="GO" id="GO:0051539">
    <property type="term" value="F:4 iron, 4 sulfur cluster binding"/>
    <property type="evidence" value="ECO:0007669"/>
    <property type="project" value="UniProtKB-KW"/>
</dbReference>
<dbReference type="GO" id="GO:0009975">
    <property type="term" value="F:cyclase activity"/>
    <property type="evidence" value="ECO:0007669"/>
    <property type="project" value="UniProtKB-UniRule"/>
</dbReference>
<dbReference type="GO" id="GO:0005506">
    <property type="term" value="F:iron ion binding"/>
    <property type="evidence" value="ECO:0007669"/>
    <property type="project" value="UniProtKB-UniRule"/>
</dbReference>
<dbReference type="GO" id="GO:0016491">
    <property type="term" value="F:oxidoreductase activity"/>
    <property type="evidence" value="ECO:0007669"/>
    <property type="project" value="UniProtKB-KW"/>
</dbReference>
<dbReference type="GO" id="GO:1904047">
    <property type="term" value="F:S-adenosyl-L-methionine binding"/>
    <property type="evidence" value="ECO:0007669"/>
    <property type="project" value="UniProtKB-UniRule"/>
</dbReference>
<dbReference type="GO" id="GO:0018189">
    <property type="term" value="P:pyrroloquinoline quinone biosynthetic process"/>
    <property type="evidence" value="ECO:0007669"/>
    <property type="project" value="UniProtKB-UniRule"/>
</dbReference>
<dbReference type="CDD" id="cd01335">
    <property type="entry name" value="Radical_SAM"/>
    <property type="match status" value="1"/>
</dbReference>
<dbReference type="CDD" id="cd21119">
    <property type="entry name" value="SPASM_PqqE"/>
    <property type="match status" value="1"/>
</dbReference>
<dbReference type="Gene3D" id="3.20.20.70">
    <property type="entry name" value="Aldolase class I"/>
    <property type="match status" value="1"/>
</dbReference>
<dbReference type="HAMAP" id="MF_00660">
    <property type="entry name" value="PqqE"/>
    <property type="match status" value="1"/>
</dbReference>
<dbReference type="InterPro" id="IPR023885">
    <property type="entry name" value="4Fe4S-binding_SPASM_dom"/>
</dbReference>
<dbReference type="InterPro" id="IPR013785">
    <property type="entry name" value="Aldolase_TIM"/>
</dbReference>
<dbReference type="InterPro" id="IPR006638">
    <property type="entry name" value="Elp3/MiaA/NifB-like_rSAM"/>
</dbReference>
<dbReference type="InterPro" id="IPR000385">
    <property type="entry name" value="MoaA_NifB_PqqE_Fe-S-bd_CS"/>
</dbReference>
<dbReference type="InterPro" id="IPR011843">
    <property type="entry name" value="PQQ_synth_PqqE_bac"/>
</dbReference>
<dbReference type="InterPro" id="IPR017200">
    <property type="entry name" value="PqqE-like"/>
</dbReference>
<dbReference type="InterPro" id="IPR050377">
    <property type="entry name" value="Radical_SAM_PqqE_MftC-like"/>
</dbReference>
<dbReference type="InterPro" id="IPR007197">
    <property type="entry name" value="rSAM"/>
</dbReference>
<dbReference type="NCBIfam" id="TIGR02109">
    <property type="entry name" value="PQQ_syn_pqqE"/>
    <property type="match status" value="1"/>
</dbReference>
<dbReference type="NCBIfam" id="TIGR04085">
    <property type="entry name" value="rSAM_more_4Fe4S"/>
    <property type="match status" value="1"/>
</dbReference>
<dbReference type="PANTHER" id="PTHR11228:SF7">
    <property type="entry name" value="PQQA PEPTIDE CYCLASE"/>
    <property type="match status" value="1"/>
</dbReference>
<dbReference type="PANTHER" id="PTHR11228">
    <property type="entry name" value="RADICAL SAM DOMAIN PROTEIN"/>
    <property type="match status" value="1"/>
</dbReference>
<dbReference type="Pfam" id="PF13353">
    <property type="entry name" value="Fer4_12"/>
    <property type="match status" value="1"/>
</dbReference>
<dbReference type="Pfam" id="PF04055">
    <property type="entry name" value="Radical_SAM"/>
    <property type="match status" value="1"/>
</dbReference>
<dbReference type="Pfam" id="PF13186">
    <property type="entry name" value="SPASM"/>
    <property type="match status" value="1"/>
</dbReference>
<dbReference type="PIRSF" id="PIRSF037420">
    <property type="entry name" value="PQQ_syn_pqqE"/>
    <property type="match status" value="1"/>
</dbReference>
<dbReference type="SFLD" id="SFLDF00280">
    <property type="entry name" value="coenzyme_PQQ_synthesis_protein"/>
    <property type="match status" value="1"/>
</dbReference>
<dbReference type="SFLD" id="SFLDG01386">
    <property type="entry name" value="main_SPASM_domain-containing"/>
    <property type="match status" value="1"/>
</dbReference>
<dbReference type="SMART" id="SM00729">
    <property type="entry name" value="Elp3"/>
    <property type="match status" value="1"/>
</dbReference>
<dbReference type="SUPFAM" id="SSF102114">
    <property type="entry name" value="Radical SAM enzymes"/>
    <property type="match status" value="1"/>
</dbReference>
<dbReference type="PROSITE" id="PS01305">
    <property type="entry name" value="MOAA_NIFB_PQQE"/>
    <property type="match status" value="1"/>
</dbReference>
<dbReference type="PROSITE" id="PS51918">
    <property type="entry name" value="RADICAL_SAM"/>
    <property type="match status" value="1"/>
</dbReference>
<gene>
    <name evidence="1" type="primary">pqqE</name>
    <name type="ordered locus">PA14_38780</name>
</gene>
<comment type="function">
    <text evidence="1">Catalyzes the cross-linking of a glutamate residue and a tyrosine residue in the PqqA protein as part of the biosynthesis of pyrroloquinoline quinone (PQQ).</text>
</comment>
<comment type="catalytic activity">
    <reaction evidence="1">
        <text>[PQQ precursor protein] + S-adenosyl-L-methionine = E-Y cross-linked-[PQQ precursor protein] + 5'-deoxyadenosine + L-methionine + H(+)</text>
        <dbReference type="Rhea" id="RHEA:56836"/>
        <dbReference type="Rhea" id="RHEA-COMP:14800"/>
        <dbReference type="Rhea" id="RHEA-COMP:14801"/>
        <dbReference type="ChEBI" id="CHEBI:15378"/>
        <dbReference type="ChEBI" id="CHEBI:17319"/>
        <dbReference type="ChEBI" id="CHEBI:57844"/>
        <dbReference type="ChEBI" id="CHEBI:59789"/>
        <dbReference type="ChEBI" id="CHEBI:141026"/>
        <dbReference type="ChEBI" id="CHEBI:141027"/>
        <dbReference type="EC" id="1.21.98.4"/>
    </reaction>
</comment>
<comment type="cofactor">
    <cofactor evidence="1">
        <name>[4Fe-4S] cluster</name>
        <dbReference type="ChEBI" id="CHEBI:49883"/>
    </cofactor>
    <text evidence="1">Binds 1 [4Fe-4S] cluster. The cluster is coordinated with 3 cysteines and an exchangeable S-adenosyl-L-methionine.</text>
</comment>
<comment type="pathway">
    <text evidence="1">Cofactor biosynthesis; pyrroloquinoline quinone biosynthesis.</text>
</comment>
<comment type="subunit">
    <text evidence="1">Interacts with PqqD. The interaction is necessary for activity of PqqE.</text>
</comment>
<comment type="similarity">
    <text evidence="1">Belongs to the radical SAM superfamily. PqqE family.</text>
</comment>